<keyword id="KW-0067">ATP-binding</keyword>
<keyword id="KW-0256">Endoplasmic reticulum</keyword>
<keyword id="KW-0472">Membrane</keyword>
<keyword id="KW-0547">Nucleotide-binding</keyword>
<keyword id="KW-1185">Reference proteome</keyword>
<keyword id="KW-0808">Transferase</keyword>
<keyword id="KW-0812">Transmembrane</keyword>
<keyword id="KW-1133">Transmembrane helix</keyword>
<keyword id="KW-0833">Ubl conjugation pathway</keyword>
<name>UBC6_KLULA</name>
<feature type="chain" id="PRO_0000082550" description="Ubiquitin-conjugating enzyme E2 6">
    <location>
        <begin position="1"/>
        <end position="251"/>
    </location>
</feature>
<feature type="topological domain" description="Cytoplasmic" evidence="2">
    <location>
        <begin position="1"/>
        <end position="229"/>
    </location>
</feature>
<feature type="transmembrane region" description="Helical" evidence="2">
    <location>
        <begin position="230"/>
        <end position="250"/>
    </location>
</feature>
<feature type="domain" description="UBC core" evidence="3">
    <location>
        <begin position="5"/>
        <end position="154"/>
    </location>
</feature>
<feature type="region of interest" description="Disordered" evidence="4">
    <location>
        <begin position="173"/>
        <end position="200"/>
    </location>
</feature>
<feature type="compositionally biased region" description="Basic and acidic residues" evidence="4">
    <location>
        <begin position="173"/>
        <end position="185"/>
    </location>
</feature>
<feature type="active site" description="Glycyl thioester intermediate" evidence="3">
    <location>
        <position position="87"/>
    </location>
</feature>
<reference key="1">
    <citation type="journal article" date="2004" name="Nature">
        <title>Genome evolution in yeasts.</title>
        <authorList>
            <person name="Dujon B."/>
            <person name="Sherman D."/>
            <person name="Fischer G."/>
            <person name="Durrens P."/>
            <person name="Casaregola S."/>
            <person name="Lafontaine I."/>
            <person name="de Montigny J."/>
            <person name="Marck C."/>
            <person name="Neuveglise C."/>
            <person name="Talla E."/>
            <person name="Goffard N."/>
            <person name="Frangeul L."/>
            <person name="Aigle M."/>
            <person name="Anthouard V."/>
            <person name="Babour A."/>
            <person name="Barbe V."/>
            <person name="Barnay S."/>
            <person name="Blanchin S."/>
            <person name="Beckerich J.-M."/>
            <person name="Beyne E."/>
            <person name="Bleykasten C."/>
            <person name="Boisrame A."/>
            <person name="Boyer J."/>
            <person name="Cattolico L."/>
            <person name="Confanioleri F."/>
            <person name="de Daruvar A."/>
            <person name="Despons L."/>
            <person name="Fabre E."/>
            <person name="Fairhead C."/>
            <person name="Ferry-Dumazet H."/>
            <person name="Groppi A."/>
            <person name="Hantraye F."/>
            <person name="Hennequin C."/>
            <person name="Jauniaux N."/>
            <person name="Joyet P."/>
            <person name="Kachouri R."/>
            <person name="Kerrest A."/>
            <person name="Koszul R."/>
            <person name="Lemaire M."/>
            <person name="Lesur I."/>
            <person name="Ma L."/>
            <person name="Muller H."/>
            <person name="Nicaud J.-M."/>
            <person name="Nikolski M."/>
            <person name="Oztas S."/>
            <person name="Ozier-Kalogeropoulos O."/>
            <person name="Pellenz S."/>
            <person name="Potier S."/>
            <person name="Richard G.-F."/>
            <person name="Straub M.-L."/>
            <person name="Suleau A."/>
            <person name="Swennen D."/>
            <person name="Tekaia F."/>
            <person name="Wesolowski-Louvel M."/>
            <person name="Westhof E."/>
            <person name="Wirth B."/>
            <person name="Zeniou-Meyer M."/>
            <person name="Zivanovic Y."/>
            <person name="Bolotin-Fukuhara M."/>
            <person name="Thierry A."/>
            <person name="Bouchier C."/>
            <person name="Caudron B."/>
            <person name="Scarpelli C."/>
            <person name="Gaillardin C."/>
            <person name="Weissenbach J."/>
            <person name="Wincker P."/>
            <person name="Souciet J.-L."/>
        </authorList>
    </citation>
    <scope>NUCLEOTIDE SEQUENCE [LARGE SCALE GENOMIC DNA]</scope>
    <source>
        <strain>ATCC 8585 / CBS 2359 / DSM 70799 / NBRC 1267 / NRRL Y-1140 / WM37</strain>
    </source>
</reference>
<proteinExistence type="inferred from homology"/>
<comment type="function">
    <text evidence="3">Catalyzes the covalent attachment of ubiquitin to other proteins. Functions in degradation of misfolded or regulated proteins localized in the endoplasmic reticulum (ER) lumen or membrane via the ubiquitin-proteasome system. Cognate E2 conjugating enzyme for the DOA10 ubiquitin ligase complex, which is part of the ERAD-C pathway responsible for the rapid degradation of membrane proteins with misfolded cytoplasmic domains.</text>
</comment>
<comment type="catalytic activity">
    <reaction evidence="3">
        <text>S-ubiquitinyl-[E1 ubiquitin-activating enzyme]-L-cysteine + [E2 ubiquitin-conjugating enzyme]-L-cysteine = [E1 ubiquitin-activating enzyme]-L-cysteine + S-ubiquitinyl-[E2 ubiquitin-conjugating enzyme]-L-cysteine.</text>
        <dbReference type="EC" id="2.3.2.23"/>
    </reaction>
</comment>
<comment type="pathway">
    <text evidence="3">Protein modification; protein ubiquitination.</text>
</comment>
<comment type="subcellular location">
    <subcellularLocation>
        <location evidence="1">Endoplasmic reticulum membrane</location>
    </subcellularLocation>
</comment>
<comment type="similarity">
    <text evidence="3">Belongs to the ubiquitin-conjugating enzyme family.</text>
</comment>
<protein>
    <recommendedName>
        <fullName>Ubiquitin-conjugating enzyme E2 6</fullName>
        <ecNumber>2.3.2.23</ecNumber>
    </recommendedName>
    <alternativeName>
        <fullName>E2 ubiquitin-conjugating enzyme 6</fullName>
    </alternativeName>
    <alternativeName>
        <fullName>Ubiquitin carrier protein UBC6</fullName>
    </alternativeName>
    <alternativeName>
        <fullName>Ubiquitin-protein ligase UBC6</fullName>
    </alternativeName>
</protein>
<sequence>MASIQANKRLTKEYKNIVNNPPPFIIAAPHEDNILEWHYVITGPPSTPYENGQYHGTLTFPSDYPFNPPAIRMITPNGRFKENTRLCLSMSDYHPEAWNPAWSVVTILNGLLSFMTGDEQTTGSVSTSDKDKRTLAKKSKHFNTYSNFKFKNMFPDLRESNIKDIEREAALEAESKGAQQEENKAQKLATEKATSLDDISDPEDRVRIQELIKAEKDKKDQDKNPGENSNIKSLLCLILAIAIFFVGLIMK</sequence>
<dbReference type="EC" id="2.3.2.23"/>
<dbReference type="EMBL" id="CR382125">
    <property type="protein sequence ID" value="CAG99960.1"/>
    <property type="molecule type" value="Genomic_DNA"/>
</dbReference>
<dbReference type="RefSeq" id="XP_454873.1">
    <property type="nucleotide sequence ID" value="XM_454873.1"/>
</dbReference>
<dbReference type="SMR" id="Q6CMG6"/>
<dbReference type="FunCoup" id="Q6CMG6">
    <property type="interactions" value="1029"/>
</dbReference>
<dbReference type="STRING" id="284590.Q6CMG6"/>
<dbReference type="PaxDb" id="284590-Q6CMG6"/>
<dbReference type="KEGG" id="kla:KLLA0_E20395g"/>
<dbReference type="eggNOG" id="KOG0894">
    <property type="taxonomic scope" value="Eukaryota"/>
</dbReference>
<dbReference type="HOGENOM" id="CLU_041481_1_0_1"/>
<dbReference type="InParanoid" id="Q6CMG6"/>
<dbReference type="OMA" id="GWSVATI"/>
<dbReference type="UniPathway" id="UPA00143"/>
<dbReference type="Proteomes" id="UP000000598">
    <property type="component" value="Chromosome E"/>
</dbReference>
<dbReference type="GO" id="GO:0005789">
    <property type="term" value="C:endoplasmic reticulum membrane"/>
    <property type="evidence" value="ECO:0007669"/>
    <property type="project" value="UniProtKB-SubCell"/>
</dbReference>
<dbReference type="GO" id="GO:0005524">
    <property type="term" value="F:ATP binding"/>
    <property type="evidence" value="ECO:0007669"/>
    <property type="project" value="UniProtKB-KW"/>
</dbReference>
<dbReference type="GO" id="GO:0061631">
    <property type="term" value="F:ubiquitin conjugating enzyme activity"/>
    <property type="evidence" value="ECO:0007669"/>
    <property type="project" value="UniProtKB-EC"/>
</dbReference>
<dbReference type="GO" id="GO:0016567">
    <property type="term" value="P:protein ubiquitination"/>
    <property type="evidence" value="ECO:0007669"/>
    <property type="project" value="UniProtKB-UniPathway"/>
</dbReference>
<dbReference type="CDD" id="cd23799">
    <property type="entry name" value="UBCc_UBE2J"/>
    <property type="match status" value="1"/>
</dbReference>
<dbReference type="FunFam" id="3.10.110.10:FF:000023">
    <property type="entry name" value="Ubiquitin-conjugating enzyme E2 J2"/>
    <property type="match status" value="1"/>
</dbReference>
<dbReference type="Gene3D" id="3.10.110.10">
    <property type="entry name" value="Ubiquitin Conjugating Enzyme"/>
    <property type="match status" value="1"/>
</dbReference>
<dbReference type="InterPro" id="IPR050113">
    <property type="entry name" value="Ub_conjugating_enzyme"/>
</dbReference>
<dbReference type="InterPro" id="IPR000608">
    <property type="entry name" value="UBQ-conjugat_E2_core"/>
</dbReference>
<dbReference type="InterPro" id="IPR016135">
    <property type="entry name" value="UBQ-conjugating_enzyme/RWD"/>
</dbReference>
<dbReference type="PANTHER" id="PTHR24067">
    <property type="entry name" value="UBIQUITIN-CONJUGATING ENZYME E2"/>
    <property type="match status" value="1"/>
</dbReference>
<dbReference type="Pfam" id="PF00179">
    <property type="entry name" value="UQ_con"/>
    <property type="match status" value="1"/>
</dbReference>
<dbReference type="SMART" id="SM00212">
    <property type="entry name" value="UBCc"/>
    <property type="match status" value="1"/>
</dbReference>
<dbReference type="SUPFAM" id="SSF54495">
    <property type="entry name" value="UBC-like"/>
    <property type="match status" value="1"/>
</dbReference>
<dbReference type="PROSITE" id="PS50127">
    <property type="entry name" value="UBC_2"/>
    <property type="match status" value="1"/>
</dbReference>
<organism>
    <name type="scientific">Kluyveromyces lactis (strain ATCC 8585 / CBS 2359 / DSM 70799 / NBRC 1267 / NRRL Y-1140 / WM37)</name>
    <name type="common">Yeast</name>
    <name type="synonym">Candida sphaerica</name>
    <dbReference type="NCBI Taxonomy" id="284590"/>
    <lineage>
        <taxon>Eukaryota</taxon>
        <taxon>Fungi</taxon>
        <taxon>Dikarya</taxon>
        <taxon>Ascomycota</taxon>
        <taxon>Saccharomycotina</taxon>
        <taxon>Saccharomycetes</taxon>
        <taxon>Saccharomycetales</taxon>
        <taxon>Saccharomycetaceae</taxon>
        <taxon>Kluyveromyces</taxon>
    </lineage>
</organism>
<evidence type="ECO:0000250" key="1">
    <source>
        <dbReference type="UniProtKB" id="Q5VVX9"/>
    </source>
</evidence>
<evidence type="ECO:0000255" key="2"/>
<evidence type="ECO:0000255" key="3">
    <source>
        <dbReference type="PROSITE-ProRule" id="PRU00388"/>
    </source>
</evidence>
<evidence type="ECO:0000256" key="4">
    <source>
        <dbReference type="SAM" id="MobiDB-lite"/>
    </source>
</evidence>
<gene>
    <name type="primary">UBC6</name>
    <name type="ordered locus">KLLA0E20493g</name>
</gene>
<accession>Q6CMG6</accession>